<sequence length="252" mass="26971">MRTPIIAGNWKMNKTASEALAFVNAVKDQLPDPSKVESVVAAPALFLQEMVEAAKGSDLKIAAENAYFEDAGAFTGETSPAALADLGVDYVVIGHSERRGYFHETDEDINKKAHAIFKNGMKPIICCGESLEQREAGEAESWVSGQIKAALKDLSADQVSSLVIAYEPIWAIGTGKTATSDQAEEICAVVRKTVADLYSQEVADKVRIQYGGSVKPANVNELMGKDDIDGGLVGGASLQPDSFLELVNYQNN</sequence>
<name>TPIS_LACPL</name>
<proteinExistence type="inferred from homology"/>
<gene>
    <name evidence="1" type="primary">tpiA</name>
    <name type="ordered locus">lp_0791</name>
</gene>
<organism>
    <name type="scientific">Lactiplantibacillus plantarum (strain ATCC BAA-793 / NCIMB 8826 / WCFS1)</name>
    <name type="common">Lactobacillus plantarum</name>
    <dbReference type="NCBI Taxonomy" id="220668"/>
    <lineage>
        <taxon>Bacteria</taxon>
        <taxon>Bacillati</taxon>
        <taxon>Bacillota</taxon>
        <taxon>Bacilli</taxon>
        <taxon>Lactobacillales</taxon>
        <taxon>Lactobacillaceae</taxon>
        <taxon>Lactiplantibacillus</taxon>
    </lineage>
</organism>
<feature type="chain" id="PRO_0000090234" description="Triosephosphate isomerase">
    <location>
        <begin position="1"/>
        <end position="252"/>
    </location>
</feature>
<feature type="active site" description="Electrophile" evidence="1">
    <location>
        <position position="95"/>
    </location>
</feature>
<feature type="active site" description="Proton acceptor" evidence="1">
    <location>
        <position position="167"/>
    </location>
</feature>
<feature type="binding site" evidence="1">
    <location>
        <begin position="9"/>
        <end position="11"/>
    </location>
    <ligand>
        <name>substrate</name>
    </ligand>
</feature>
<feature type="binding site" evidence="1">
    <location>
        <position position="173"/>
    </location>
    <ligand>
        <name>substrate</name>
    </ligand>
</feature>
<feature type="binding site" evidence="1">
    <location>
        <position position="213"/>
    </location>
    <ligand>
        <name>substrate</name>
    </ligand>
</feature>
<feature type="binding site" evidence="1">
    <location>
        <begin position="234"/>
        <end position="235"/>
    </location>
    <ligand>
        <name>substrate</name>
    </ligand>
</feature>
<keyword id="KW-0963">Cytoplasm</keyword>
<keyword id="KW-0312">Gluconeogenesis</keyword>
<keyword id="KW-0324">Glycolysis</keyword>
<keyword id="KW-0413">Isomerase</keyword>
<keyword id="KW-1185">Reference proteome</keyword>
<dbReference type="EC" id="5.3.1.1" evidence="1"/>
<dbReference type="EMBL" id="AL935263">
    <property type="protein sequence ID" value="CCC78251.1"/>
    <property type="molecule type" value="Genomic_DNA"/>
</dbReference>
<dbReference type="RefSeq" id="WP_003643975.1">
    <property type="nucleotide sequence ID" value="NC_004567.2"/>
</dbReference>
<dbReference type="RefSeq" id="YP_004888765.1">
    <property type="nucleotide sequence ID" value="NC_004567.2"/>
</dbReference>
<dbReference type="SMR" id="Q88YH4"/>
<dbReference type="STRING" id="220668.lp_0791"/>
<dbReference type="EnsemblBacteria" id="CCC78251">
    <property type="protein sequence ID" value="CCC78251"/>
    <property type="gene ID" value="lp_0791"/>
</dbReference>
<dbReference type="GeneID" id="89668352"/>
<dbReference type="KEGG" id="lpl:lp_0791"/>
<dbReference type="PATRIC" id="fig|220668.9.peg.668"/>
<dbReference type="eggNOG" id="COG0149">
    <property type="taxonomic scope" value="Bacteria"/>
</dbReference>
<dbReference type="HOGENOM" id="CLU_024251_2_3_9"/>
<dbReference type="OrthoDB" id="9809429at2"/>
<dbReference type="PhylomeDB" id="Q88YH4"/>
<dbReference type="UniPathway" id="UPA00109">
    <property type="reaction ID" value="UER00189"/>
</dbReference>
<dbReference type="UniPathway" id="UPA00138"/>
<dbReference type="Proteomes" id="UP000000432">
    <property type="component" value="Chromosome"/>
</dbReference>
<dbReference type="GO" id="GO:0005829">
    <property type="term" value="C:cytosol"/>
    <property type="evidence" value="ECO:0007669"/>
    <property type="project" value="TreeGrafter"/>
</dbReference>
<dbReference type="GO" id="GO:0004807">
    <property type="term" value="F:triose-phosphate isomerase activity"/>
    <property type="evidence" value="ECO:0007669"/>
    <property type="project" value="UniProtKB-UniRule"/>
</dbReference>
<dbReference type="GO" id="GO:0006094">
    <property type="term" value="P:gluconeogenesis"/>
    <property type="evidence" value="ECO:0007669"/>
    <property type="project" value="UniProtKB-UniRule"/>
</dbReference>
<dbReference type="GO" id="GO:0046166">
    <property type="term" value="P:glyceraldehyde-3-phosphate biosynthetic process"/>
    <property type="evidence" value="ECO:0007669"/>
    <property type="project" value="TreeGrafter"/>
</dbReference>
<dbReference type="GO" id="GO:0019563">
    <property type="term" value="P:glycerol catabolic process"/>
    <property type="evidence" value="ECO:0007669"/>
    <property type="project" value="TreeGrafter"/>
</dbReference>
<dbReference type="GO" id="GO:0006096">
    <property type="term" value="P:glycolytic process"/>
    <property type="evidence" value="ECO:0007669"/>
    <property type="project" value="UniProtKB-UniRule"/>
</dbReference>
<dbReference type="CDD" id="cd00311">
    <property type="entry name" value="TIM"/>
    <property type="match status" value="1"/>
</dbReference>
<dbReference type="FunFam" id="3.20.20.70:FF:000016">
    <property type="entry name" value="Triosephosphate isomerase"/>
    <property type="match status" value="1"/>
</dbReference>
<dbReference type="Gene3D" id="3.20.20.70">
    <property type="entry name" value="Aldolase class I"/>
    <property type="match status" value="1"/>
</dbReference>
<dbReference type="HAMAP" id="MF_00147_B">
    <property type="entry name" value="TIM_B"/>
    <property type="match status" value="1"/>
</dbReference>
<dbReference type="InterPro" id="IPR013785">
    <property type="entry name" value="Aldolase_TIM"/>
</dbReference>
<dbReference type="InterPro" id="IPR035990">
    <property type="entry name" value="TIM_sf"/>
</dbReference>
<dbReference type="InterPro" id="IPR022896">
    <property type="entry name" value="TrioseP_Isoase_bac/euk"/>
</dbReference>
<dbReference type="InterPro" id="IPR000652">
    <property type="entry name" value="Triosephosphate_isomerase"/>
</dbReference>
<dbReference type="InterPro" id="IPR020861">
    <property type="entry name" value="Triosephosphate_isomerase_AS"/>
</dbReference>
<dbReference type="NCBIfam" id="TIGR00419">
    <property type="entry name" value="tim"/>
    <property type="match status" value="1"/>
</dbReference>
<dbReference type="PANTHER" id="PTHR21139">
    <property type="entry name" value="TRIOSEPHOSPHATE ISOMERASE"/>
    <property type="match status" value="1"/>
</dbReference>
<dbReference type="PANTHER" id="PTHR21139:SF42">
    <property type="entry name" value="TRIOSEPHOSPHATE ISOMERASE"/>
    <property type="match status" value="1"/>
</dbReference>
<dbReference type="Pfam" id="PF00121">
    <property type="entry name" value="TIM"/>
    <property type="match status" value="1"/>
</dbReference>
<dbReference type="SUPFAM" id="SSF51351">
    <property type="entry name" value="Triosephosphate isomerase (TIM)"/>
    <property type="match status" value="1"/>
</dbReference>
<dbReference type="PROSITE" id="PS00171">
    <property type="entry name" value="TIM_1"/>
    <property type="match status" value="1"/>
</dbReference>
<dbReference type="PROSITE" id="PS51440">
    <property type="entry name" value="TIM_2"/>
    <property type="match status" value="1"/>
</dbReference>
<reference key="1">
    <citation type="journal article" date="2003" name="Proc. Natl. Acad. Sci. U.S.A.">
        <title>Complete genome sequence of Lactobacillus plantarum WCFS1.</title>
        <authorList>
            <person name="Kleerebezem M."/>
            <person name="Boekhorst J."/>
            <person name="van Kranenburg R."/>
            <person name="Molenaar D."/>
            <person name="Kuipers O.P."/>
            <person name="Leer R."/>
            <person name="Tarchini R."/>
            <person name="Peters S.A."/>
            <person name="Sandbrink H.M."/>
            <person name="Fiers M.W.E.J."/>
            <person name="Stiekema W."/>
            <person name="Klein Lankhorst R.M."/>
            <person name="Bron P.A."/>
            <person name="Hoffer S.M."/>
            <person name="Nierop Groot M.N."/>
            <person name="Kerkhoven R."/>
            <person name="De Vries M."/>
            <person name="Ursing B."/>
            <person name="De Vos W.M."/>
            <person name="Siezen R.J."/>
        </authorList>
    </citation>
    <scope>NUCLEOTIDE SEQUENCE [LARGE SCALE GENOMIC DNA]</scope>
    <source>
        <strain>ATCC BAA-793 / NCIMB 8826 / WCFS1</strain>
    </source>
</reference>
<reference key="2">
    <citation type="journal article" date="2012" name="J. Bacteriol.">
        <title>Complete resequencing and reannotation of the Lactobacillus plantarum WCFS1 genome.</title>
        <authorList>
            <person name="Siezen R.J."/>
            <person name="Francke C."/>
            <person name="Renckens B."/>
            <person name="Boekhorst J."/>
            <person name="Wels M."/>
            <person name="Kleerebezem M."/>
            <person name="van Hijum S.A."/>
        </authorList>
    </citation>
    <scope>NUCLEOTIDE SEQUENCE [LARGE SCALE GENOMIC DNA]</scope>
    <scope>GENOME REANNOTATION</scope>
    <source>
        <strain>ATCC BAA-793 / NCIMB 8826 / WCFS1</strain>
    </source>
</reference>
<accession>Q88YH4</accession>
<accession>F9UM12</accession>
<protein>
    <recommendedName>
        <fullName evidence="1">Triosephosphate isomerase</fullName>
        <shortName evidence="1">TIM</shortName>
        <shortName evidence="1">TPI</shortName>
        <ecNumber evidence="1">5.3.1.1</ecNumber>
    </recommendedName>
    <alternativeName>
        <fullName evidence="1">Triose-phosphate isomerase</fullName>
    </alternativeName>
</protein>
<evidence type="ECO:0000255" key="1">
    <source>
        <dbReference type="HAMAP-Rule" id="MF_00147"/>
    </source>
</evidence>
<comment type="function">
    <text evidence="1">Involved in the gluconeogenesis. Catalyzes stereospecifically the conversion of dihydroxyacetone phosphate (DHAP) to D-glyceraldehyde-3-phosphate (G3P).</text>
</comment>
<comment type="catalytic activity">
    <reaction evidence="1">
        <text>D-glyceraldehyde 3-phosphate = dihydroxyacetone phosphate</text>
        <dbReference type="Rhea" id="RHEA:18585"/>
        <dbReference type="ChEBI" id="CHEBI:57642"/>
        <dbReference type="ChEBI" id="CHEBI:59776"/>
        <dbReference type="EC" id="5.3.1.1"/>
    </reaction>
</comment>
<comment type="pathway">
    <text evidence="1">Carbohydrate biosynthesis; gluconeogenesis.</text>
</comment>
<comment type="pathway">
    <text evidence="1">Carbohydrate degradation; glycolysis; D-glyceraldehyde 3-phosphate from glycerone phosphate: step 1/1.</text>
</comment>
<comment type="subunit">
    <text evidence="1">Homodimer.</text>
</comment>
<comment type="subcellular location">
    <subcellularLocation>
        <location evidence="1">Cytoplasm</location>
    </subcellularLocation>
</comment>
<comment type="similarity">
    <text evidence="1">Belongs to the triosephosphate isomerase family.</text>
</comment>